<proteinExistence type="inferred from homology"/>
<feature type="chain" id="PRO_0000268580" description="Bifunctional protein FolD">
    <location>
        <begin position="1"/>
        <end position="297"/>
    </location>
</feature>
<feature type="binding site" evidence="1">
    <location>
        <begin position="164"/>
        <end position="166"/>
    </location>
    <ligand>
        <name>NADP(+)</name>
        <dbReference type="ChEBI" id="CHEBI:58349"/>
    </ligand>
</feature>
<feature type="binding site" evidence="1">
    <location>
        <position position="193"/>
    </location>
    <ligand>
        <name>NADP(+)</name>
        <dbReference type="ChEBI" id="CHEBI:58349"/>
    </ligand>
</feature>
<feature type="binding site" evidence="1">
    <location>
        <position position="234"/>
    </location>
    <ligand>
        <name>NADP(+)</name>
        <dbReference type="ChEBI" id="CHEBI:58349"/>
    </ligand>
</feature>
<dbReference type="EC" id="1.5.1.5" evidence="1"/>
<dbReference type="EC" id="3.5.4.9" evidence="1"/>
<dbReference type="EMBL" id="AE004437">
    <property type="protein sequence ID" value="AAG19733.1"/>
    <property type="molecule type" value="Genomic_DNA"/>
</dbReference>
<dbReference type="PIR" id="A84296">
    <property type="entry name" value="A84296"/>
</dbReference>
<dbReference type="RefSeq" id="WP_010903030.1">
    <property type="nucleotide sequence ID" value="NC_002607.1"/>
</dbReference>
<dbReference type="SMR" id="Q9HPY4"/>
<dbReference type="STRING" id="64091.VNG_1416G"/>
<dbReference type="PaxDb" id="64091-VNG_1416G"/>
<dbReference type="KEGG" id="hal:VNG_1416G"/>
<dbReference type="PATRIC" id="fig|64091.14.peg.1083"/>
<dbReference type="HOGENOM" id="CLU_034045_1_2_2"/>
<dbReference type="InParanoid" id="Q9HPY4"/>
<dbReference type="OrthoDB" id="9455at2157"/>
<dbReference type="PhylomeDB" id="Q9HPY4"/>
<dbReference type="UniPathway" id="UPA00193"/>
<dbReference type="Proteomes" id="UP000000554">
    <property type="component" value="Chromosome"/>
</dbReference>
<dbReference type="GO" id="GO:0005829">
    <property type="term" value="C:cytosol"/>
    <property type="evidence" value="ECO:0000318"/>
    <property type="project" value="GO_Central"/>
</dbReference>
<dbReference type="GO" id="GO:0004477">
    <property type="term" value="F:methenyltetrahydrofolate cyclohydrolase activity"/>
    <property type="evidence" value="ECO:0000318"/>
    <property type="project" value="GO_Central"/>
</dbReference>
<dbReference type="GO" id="GO:0004488">
    <property type="term" value="F:methylenetetrahydrofolate dehydrogenase (NADP+) activity"/>
    <property type="evidence" value="ECO:0000318"/>
    <property type="project" value="GO_Central"/>
</dbReference>
<dbReference type="GO" id="GO:0000105">
    <property type="term" value="P:L-histidine biosynthetic process"/>
    <property type="evidence" value="ECO:0007669"/>
    <property type="project" value="UniProtKB-KW"/>
</dbReference>
<dbReference type="GO" id="GO:0009086">
    <property type="term" value="P:methionine biosynthetic process"/>
    <property type="evidence" value="ECO:0007669"/>
    <property type="project" value="UniProtKB-KW"/>
</dbReference>
<dbReference type="GO" id="GO:0006164">
    <property type="term" value="P:purine nucleotide biosynthetic process"/>
    <property type="evidence" value="ECO:0007669"/>
    <property type="project" value="UniProtKB-KW"/>
</dbReference>
<dbReference type="GO" id="GO:0035999">
    <property type="term" value="P:tetrahydrofolate interconversion"/>
    <property type="evidence" value="ECO:0000318"/>
    <property type="project" value="GO_Central"/>
</dbReference>
<dbReference type="CDD" id="cd01080">
    <property type="entry name" value="NAD_bind_m-THF_DH_Cyclohyd"/>
    <property type="match status" value="1"/>
</dbReference>
<dbReference type="FunFam" id="3.40.50.720:FF:000006">
    <property type="entry name" value="Bifunctional protein FolD"/>
    <property type="match status" value="1"/>
</dbReference>
<dbReference type="FunFam" id="3.40.50.10860:FF:000005">
    <property type="entry name" value="C-1-tetrahydrofolate synthase, cytoplasmic, putative"/>
    <property type="match status" value="1"/>
</dbReference>
<dbReference type="Gene3D" id="3.40.50.10860">
    <property type="entry name" value="Leucine Dehydrogenase, chain A, domain 1"/>
    <property type="match status" value="1"/>
</dbReference>
<dbReference type="Gene3D" id="3.40.50.720">
    <property type="entry name" value="NAD(P)-binding Rossmann-like Domain"/>
    <property type="match status" value="1"/>
</dbReference>
<dbReference type="HAMAP" id="MF_01576">
    <property type="entry name" value="THF_DHG_CYH"/>
    <property type="match status" value="1"/>
</dbReference>
<dbReference type="InterPro" id="IPR046346">
    <property type="entry name" value="Aminoacid_DH-like_N_sf"/>
</dbReference>
<dbReference type="InterPro" id="IPR036291">
    <property type="entry name" value="NAD(P)-bd_dom_sf"/>
</dbReference>
<dbReference type="InterPro" id="IPR000672">
    <property type="entry name" value="THF_DH/CycHdrlase"/>
</dbReference>
<dbReference type="InterPro" id="IPR020630">
    <property type="entry name" value="THF_DH/CycHdrlase_cat_dom"/>
</dbReference>
<dbReference type="InterPro" id="IPR020631">
    <property type="entry name" value="THF_DH/CycHdrlase_NAD-bd_dom"/>
</dbReference>
<dbReference type="NCBIfam" id="NF010764">
    <property type="entry name" value="PRK14167.1"/>
    <property type="match status" value="1"/>
</dbReference>
<dbReference type="PANTHER" id="PTHR48099:SF5">
    <property type="entry name" value="C-1-TETRAHYDROFOLATE SYNTHASE, CYTOPLASMIC"/>
    <property type="match status" value="1"/>
</dbReference>
<dbReference type="PANTHER" id="PTHR48099">
    <property type="entry name" value="C-1-TETRAHYDROFOLATE SYNTHASE, CYTOPLASMIC-RELATED"/>
    <property type="match status" value="1"/>
</dbReference>
<dbReference type="Pfam" id="PF00763">
    <property type="entry name" value="THF_DHG_CYH"/>
    <property type="match status" value="1"/>
</dbReference>
<dbReference type="Pfam" id="PF02882">
    <property type="entry name" value="THF_DHG_CYH_C"/>
    <property type="match status" value="1"/>
</dbReference>
<dbReference type="PRINTS" id="PR00085">
    <property type="entry name" value="THFDHDRGNASE"/>
</dbReference>
<dbReference type="SUPFAM" id="SSF53223">
    <property type="entry name" value="Aminoacid dehydrogenase-like, N-terminal domain"/>
    <property type="match status" value="1"/>
</dbReference>
<dbReference type="SUPFAM" id="SSF51735">
    <property type="entry name" value="NAD(P)-binding Rossmann-fold domains"/>
    <property type="match status" value="1"/>
</dbReference>
<keyword id="KW-0028">Amino-acid biosynthesis</keyword>
<keyword id="KW-0368">Histidine biosynthesis</keyword>
<keyword id="KW-0378">Hydrolase</keyword>
<keyword id="KW-0486">Methionine biosynthesis</keyword>
<keyword id="KW-0511">Multifunctional enzyme</keyword>
<keyword id="KW-0521">NADP</keyword>
<keyword id="KW-0554">One-carbon metabolism</keyword>
<keyword id="KW-0560">Oxidoreductase</keyword>
<keyword id="KW-0658">Purine biosynthesis</keyword>
<keyword id="KW-1185">Reference proteome</keyword>
<name>FOLD_HALSA</name>
<protein>
    <recommendedName>
        <fullName evidence="1">Bifunctional protein FolD</fullName>
    </recommendedName>
    <domain>
        <recommendedName>
            <fullName evidence="1">Methylenetetrahydrofolate dehydrogenase</fullName>
            <ecNumber evidence="1">1.5.1.5</ecNumber>
        </recommendedName>
    </domain>
    <domain>
        <recommendedName>
            <fullName evidence="1">Methenyltetrahydrofolate cyclohydrolase</fullName>
            <ecNumber evidence="1">3.5.4.9</ecNumber>
        </recommendedName>
    </domain>
</protein>
<gene>
    <name evidence="1" type="primary">folD</name>
    <name type="ordered locus">VNG_1416G</name>
</gene>
<comment type="function">
    <text evidence="1">Catalyzes the oxidation of 5,10-methylenetetrahydrofolate to 5,10-methenyltetrahydrofolate and then the hydrolysis of 5,10-methenyltetrahydrofolate to 10-formyltetrahydrofolate.</text>
</comment>
<comment type="catalytic activity">
    <reaction evidence="1">
        <text>(6R)-5,10-methylene-5,6,7,8-tetrahydrofolate + NADP(+) = (6R)-5,10-methenyltetrahydrofolate + NADPH</text>
        <dbReference type="Rhea" id="RHEA:22812"/>
        <dbReference type="ChEBI" id="CHEBI:15636"/>
        <dbReference type="ChEBI" id="CHEBI:57455"/>
        <dbReference type="ChEBI" id="CHEBI:57783"/>
        <dbReference type="ChEBI" id="CHEBI:58349"/>
        <dbReference type="EC" id="1.5.1.5"/>
    </reaction>
</comment>
<comment type="catalytic activity">
    <reaction evidence="1">
        <text>(6R)-5,10-methenyltetrahydrofolate + H2O = (6R)-10-formyltetrahydrofolate + H(+)</text>
        <dbReference type="Rhea" id="RHEA:23700"/>
        <dbReference type="ChEBI" id="CHEBI:15377"/>
        <dbReference type="ChEBI" id="CHEBI:15378"/>
        <dbReference type="ChEBI" id="CHEBI:57455"/>
        <dbReference type="ChEBI" id="CHEBI:195366"/>
        <dbReference type="EC" id="3.5.4.9"/>
    </reaction>
</comment>
<comment type="pathway">
    <text evidence="1">One-carbon metabolism; tetrahydrofolate interconversion.</text>
</comment>
<comment type="subunit">
    <text evidence="1">Homodimer.</text>
</comment>
<comment type="similarity">
    <text evidence="1">Belongs to the tetrahydrofolate dehydrogenase/cyclohydrolase family.</text>
</comment>
<accession>Q9HPY4</accession>
<sequence length="297" mass="30807">MTEIIDGDAVAAQLRADLTGAVETLETAGVTPRLATVLMNDKQASETYVSMKQQDCEEVGIAAEDVRIDPEASADTLFDTVAELNAREDVHGILVQDPTPDHVPDERVLSAVDPAKDVDGFHPENVGKLVGGTPRFKPCTPHGVQKLLAHQGVDPDGAEVVVVGRSNIVGKPLANLLAQKAAGGNATVTICHSHTDDLAAHTRRADVVVAACGVPELIDGDMLSGDPVVIDVGINRVDADTEKGYELVGDVDYDSAEAAASAITPVPGGVGPMTRAMLLYNTLAAASEQTGVAVALP</sequence>
<evidence type="ECO:0000255" key="1">
    <source>
        <dbReference type="HAMAP-Rule" id="MF_01576"/>
    </source>
</evidence>
<organism>
    <name type="scientific">Halobacterium salinarum (strain ATCC 700922 / JCM 11081 / NRC-1)</name>
    <name type="common">Halobacterium halobium</name>
    <dbReference type="NCBI Taxonomy" id="64091"/>
    <lineage>
        <taxon>Archaea</taxon>
        <taxon>Methanobacteriati</taxon>
        <taxon>Methanobacteriota</taxon>
        <taxon>Stenosarchaea group</taxon>
        <taxon>Halobacteria</taxon>
        <taxon>Halobacteriales</taxon>
        <taxon>Halobacteriaceae</taxon>
        <taxon>Halobacterium</taxon>
        <taxon>Halobacterium salinarum NRC-34001</taxon>
    </lineage>
</organism>
<reference key="1">
    <citation type="journal article" date="2000" name="Proc. Natl. Acad. Sci. U.S.A.">
        <title>Genome sequence of Halobacterium species NRC-1.</title>
        <authorList>
            <person name="Ng W.V."/>
            <person name="Kennedy S.P."/>
            <person name="Mahairas G.G."/>
            <person name="Berquist B."/>
            <person name="Pan M."/>
            <person name="Shukla H.D."/>
            <person name="Lasky S.R."/>
            <person name="Baliga N.S."/>
            <person name="Thorsson V."/>
            <person name="Sbrogna J."/>
            <person name="Swartzell S."/>
            <person name="Weir D."/>
            <person name="Hall J."/>
            <person name="Dahl T.A."/>
            <person name="Welti R."/>
            <person name="Goo Y.A."/>
            <person name="Leithauser B."/>
            <person name="Keller K."/>
            <person name="Cruz R."/>
            <person name="Danson M.J."/>
            <person name="Hough D.W."/>
            <person name="Maddocks D.G."/>
            <person name="Jablonski P.E."/>
            <person name="Krebs M.P."/>
            <person name="Angevine C.M."/>
            <person name="Dale H."/>
            <person name="Isenbarger T.A."/>
            <person name="Peck R.F."/>
            <person name="Pohlschroder M."/>
            <person name="Spudich J.L."/>
            <person name="Jung K.-H."/>
            <person name="Alam M."/>
            <person name="Freitas T."/>
            <person name="Hou S."/>
            <person name="Daniels C.J."/>
            <person name="Dennis P.P."/>
            <person name="Omer A.D."/>
            <person name="Ebhardt H."/>
            <person name="Lowe T.M."/>
            <person name="Liang P."/>
            <person name="Riley M."/>
            <person name="Hood L."/>
            <person name="DasSarma S."/>
        </authorList>
    </citation>
    <scope>NUCLEOTIDE SEQUENCE [LARGE SCALE GENOMIC DNA]</scope>
    <source>
        <strain>ATCC 700922 / JCM 11081 / NRC-1</strain>
    </source>
</reference>